<proteinExistence type="inferred from homology"/>
<gene>
    <name evidence="1" type="primary">uppS</name>
    <name type="ordered locus">GK1253</name>
</gene>
<name>ISPT_GEOKA</name>
<keyword id="KW-0460">Magnesium</keyword>
<keyword id="KW-0479">Metal-binding</keyword>
<keyword id="KW-1185">Reference proteome</keyword>
<keyword id="KW-0808">Transferase</keyword>
<reference key="1">
    <citation type="journal article" date="2004" name="Nucleic Acids Res.">
        <title>Thermoadaptation trait revealed by the genome sequence of thermophilic Geobacillus kaustophilus.</title>
        <authorList>
            <person name="Takami H."/>
            <person name="Takaki Y."/>
            <person name="Chee G.-J."/>
            <person name="Nishi S."/>
            <person name="Shimamura S."/>
            <person name="Suzuki H."/>
            <person name="Matsui S."/>
            <person name="Uchiyama I."/>
        </authorList>
    </citation>
    <scope>NUCLEOTIDE SEQUENCE [LARGE SCALE GENOMIC DNA]</scope>
    <source>
        <strain>HTA426</strain>
    </source>
</reference>
<dbReference type="EC" id="2.5.1.-" evidence="1"/>
<dbReference type="EMBL" id="BA000043">
    <property type="protein sequence ID" value="BAD75538.1"/>
    <property type="molecule type" value="Genomic_DNA"/>
</dbReference>
<dbReference type="RefSeq" id="WP_011230753.1">
    <property type="nucleotide sequence ID" value="NC_006510.1"/>
</dbReference>
<dbReference type="SMR" id="Q5L0J8"/>
<dbReference type="STRING" id="235909.GK1253"/>
<dbReference type="KEGG" id="gka:GK1253"/>
<dbReference type="eggNOG" id="COG0020">
    <property type="taxonomic scope" value="Bacteria"/>
</dbReference>
<dbReference type="HOGENOM" id="CLU_038505_1_1_9"/>
<dbReference type="Proteomes" id="UP000001172">
    <property type="component" value="Chromosome"/>
</dbReference>
<dbReference type="GO" id="GO:0005829">
    <property type="term" value="C:cytosol"/>
    <property type="evidence" value="ECO:0007669"/>
    <property type="project" value="TreeGrafter"/>
</dbReference>
<dbReference type="GO" id="GO:0008834">
    <property type="term" value="F:ditrans,polycis-undecaprenyl-diphosphate synthase [(2E,6E)-farnesyl-diphosphate specific] activity"/>
    <property type="evidence" value="ECO:0007669"/>
    <property type="project" value="TreeGrafter"/>
</dbReference>
<dbReference type="GO" id="GO:0000287">
    <property type="term" value="F:magnesium ion binding"/>
    <property type="evidence" value="ECO:0007669"/>
    <property type="project" value="UniProtKB-UniRule"/>
</dbReference>
<dbReference type="GO" id="GO:0030145">
    <property type="term" value="F:manganese ion binding"/>
    <property type="evidence" value="ECO:0007669"/>
    <property type="project" value="TreeGrafter"/>
</dbReference>
<dbReference type="GO" id="GO:0016094">
    <property type="term" value="P:polyprenol biosynthetic process"/>
    <property type="evidence" value="ECO:0007669"/>
    <property type="project" value="TreeGrafter"/>
</dbReference>
<dbReference type="CDD" id="cd00475">
    <property type="entry name" value="Cis_IPPS"/>
    <property type="match status" value="1"/>
</dbReference>
<dbReference type="FunFam" id="3.40.1180.10:FF:000001">
    <property type="entry name" value="(2E,6E)-farnesyl-diphosphate-specific ditrans,polycis-undecaprenyl-diphosphate synthase"/>
    <property type="match status" value="1"/>
</dbReference>
<dbReference type="Gene3D" id="3.40.1180.10">
    <property type="entry name" value="Decaprenyl diphosphate synthase-like"/>
    <property type="match status" value="1"/>
</dbReference>
<dbReference type="HAMAP" id="MF_01139">
    <property type="entry name" value="ISPT"/>
    <property type="match status" value="1"/>
</dbReference>
<dbReference type="InterPro" id="IPR001441">
    <property type="entry name" value="UPP_synth-like"/>
</dbReference>
<dbReference type="InterPro" id="IPR018520">
    <property type="entry name" value="UPP_synth-like_CS"/>
</dbReference>
<dbReference type="InterPro" id="IPR036424">
    <property type="entry name" value="UPP_synth-like_sf"/>
</dbReference>
<dbReference type="NCBIfam" id="NF011405">
    <property type="entry name" value="PRK14830.1"/>
    <property type="match status" value="1"/>
</dbReference>
<dbReference type="NCBIfam" id="TIGR00055">
    <property type="entry name" value="uppS"/>
    <property type="match status" value="1"/>
</dbReference>
<dbReference type="PANTHER" id="PTHR10291:SF0">
    <property type="entry name" value="DEHYDRODOLICHYL DIPHOSPHATE SYNTHASE 2"/>
    <property type="match status" value="1"/>
</dbReference>
<dbReference type="PANTHER" id="PTHR10291">
    <property type="entry name" value="DEHYDRODOLICHYL DIPHOSPHATE SYNTHASE FAMILY MEMBER"/>
    <property type="match status" value="1"/>
</dbReference>
<dbReference type="Pfam" id="PF01255">
    <property type="entry name" value="Prenyltransf"/>
    <property type="match status" value="1"/>
</dbReference>
<dbReference type="SUPFAM" id="SSF64005">
    <property type="entry name" value="Undecaprenyl diphosphate synthase"/>
    <property type="match status" value="1"/>
</dbReference>
<dbReference type="PROSITE" id="PS01066">
    <property type="entry name" value="UPP_SYNTHASE"/>
    <property type="match status" value="1"/>
</dbReference>
<protein>
    <recommendedName>
        <fullName evidence="1">Isoprenyl transferase</fullName>
        <ecNumber evidence="1">2.5.1.-</ecNumber>
    </recommendedName>
</protein>
<organism>
    <name type="scientific">Geobacillus kaustophilus (strain HTA426)</name>
    <dbReference type="NCBI Taxonomy" id="235909"/>
    <lineage>
        <taxon>Bacteria</taxon>
        <taxon>Bacillati</taxon>
        <taxon>Bacillota</taxon>
        <taxon>Bacilli</taxon>
        <taxon>Bacillales</taxon>
        <taxon>Anoxybacillaceae</taxon>
        <taxon>Geobacillus</taxon>
        <taxon>Geobacillus thermoleovorans group</taxon>
    </lineage>
</organism>
<evidence type="ECO:0000255" key="1">
    <source>
        <dbReference type="HAMAP-Rule" id="MF_01139"/>
    </source>
</evidence>
<sequence length="257" mass="29319">MFNKMRKTKEKDVPVTKEEVLRHPMPNHVAIIMDGNGRWAKKRALPRAAGHYEGMQVVRKITRFANELGIQILSLYAFSTENWKRPKSEVDYLMKLPEQFLTTFLPELVAENVKVQVIGHTEALPDHTRRAVEKAVKETSGNTGLVLNFALNYGSRAEIAAAVKQIAKDVERGMLAPEDITEPLISSYLMTSGLADPDLLIRTSGEIRLSNFMLWQLAYTELWFTDVLWPDFTEQHFLEAIAAYQRRDRRFGGVSAR</sequence>
<accession>Q5L0J8</accession>
<comment type="function">
    <text evidence="1">Catalyzes the condensation of isopentenyl diphosphate (IPP) with allylic pyrophosphates generating different type of terpenoids.</text>
</comment>
<comment type="cofactor">
    <cofactor evidence="1">
        <name>Mg(2+)</name>
        <dbReference type="ChEBI" id="CHEBI:18420"/>
    </cofactor>
    <text evidence="1">Binds 2 magnesium ions per subunit.</text>
</comment>
<comment type="subunit">
    <text evidence="1">Homodimer.</text>
</comment>
<comment type="similarity">
    <text evidence="1">Belongs to the UPP synthase family.</text>
</comment>
<feature type="chain" id="PRO_0000123616" description="Isoprenyl transferase">
    <location>
        <begin position="1"/>
        <end position="257"/>
    </location>
</feature>
<feature type="active site" evidence="1">
    <location>
        <position position="34"/>
    </location>
</feature>
<feature type="active site" description="Proton acceptor" evidence="1">
    <location>
        <position position="82"/>
    </location>
</feature>
<feature type="binding site" evidence="1">
    <location>
        <position position="34"/>
    </location>
    <ligand>
        <name>Mg(2+)</name>
        <dbReference type="ChEBI" id="CHEBI:18420"/>
    </ligand>
</feature>
<feature type="binding site" evidence="1">
    <location>
        <begin position="35"/>
        <end position="38"/>
    </location>
    <ligand>
        <name>substrate</name>
    </ligand>
</feature>
<feature type="binding site" evidence="1">
    <location>
        <position position="39"/>
    </location>
    <ligand>
        <name>substrate</name>
    </ligand>
</feature>
<feature type="binding site" evidence="1">
    <location>
        <position position="47"/>
    </location>
    <ligand>
        <name>substrate</name>
    </ligand>
</feature>
<feature type="binding site" evidence="1">
    <location>
        <position position="51"/>
    </location>
    <ligand>
        <name>substrate</name>
    </ligand>
</feature>
<feature type="binding site" evidence="1">
    <location>
        <begin position="79"/>
        <end position="81"/>
    </location>
    <ligand>
        <name>substrate</name>
    </ligand>
</feature>
<feature type="binding site" evidence="1">
    <location>
        <position position="83"/>
    </location>
    <ligand>
        <name>substrate</name>
    </ligand>
</feature>
<feature type="binding site" evidence="1">
    <location>
        <position position="85"/>
    </location>
    <ligand>
        <name>substrate</name>
    </ligand>
</feature>
<feature type="binding site" evidence="1">
    <location>
        <position position="202"/>
    </location>
    <ligand>
        <name>substrate</name>
    </ligand>
</feature>
<feature type="binding site" evidence="1">
    <location>
        <begin position="208"/>
        <end position="210"/>
    </location>
    <ligand>
        <name>substrate</name>
    </ligand>
</feature>
<feature type="binding site" evidence="1">
    <location>
        <position position="221"/>
    </location>
    <ligand>
        <name>Mg(2+)</name>
        <dbReference type="ChEBI" id="CHEBI:18420"/>
    </ligand>
</feature>